<organism>
    <name type="scientific">Lissachatina fulica</name>
    <name type="common">Giant African land snail</name>
    <name type="synonym">Achatina fulica</name>
    <dbReference type="NCBI Taxonomy" id="2315439"/>
    <lineage>
        <taxon>Eukaryota</taxon>
        <taxon>Metazoa</taxon>
        <taxon>Spiralia</taxon>
        <taxon>Lophotrochozoa</taxon>
        <taxon>Mollusca</taxon>
        <taxon>Gastropoda</taxon>
        <taxon>Heterobranchia</taxon>
        <taxon>Euthyneura</taxon>
        <taxon>Panpulmonata</taxon>
        <taxon>Eupulmonata</taxon>
        <taxon>Stylommatophora</taxon>
        <taxon>Helicina</taxon>
        <taxon>Achatinoidea</taxon>
        <taxon>Achatinidae</taxon>
        <taxon>Lissachatina</taxon>
    </lineage>
</organism>
<sequence>WKEMSVW</sequence>
<name>WWA3_LISFU</name>
<reference key="1">
    <citation type="journal article" date="1993" name="FEBS Lett.">
        <title>WWamide-1, -2 and -3: novel neuromodulatory peptides isolated from ganglia of the African giant snail, Achatina fulica.</title>
        <authorList>
            <person name="Minakata H."/>
            <person name="Ikeda T."/>
            <person name="Muneoka Y."/>
            <person name="Kobayashi M."/>
            <person name="Nomoto K."/>
        </authorList>
    </citation>
    <scope>PROTEIN SEQUENCE</scope>
    <scope>AMIDATION AT TRP-7</scope>
    <source>
        <tissue>Ganglion</tissue>
    </source>
</reference>
<dbReference type="PIR" id="S33244">
    <property type="entry name" value="S33244"/>
</dbReference>
<dbReference type="GO" id="GO:0007218">
    <property type="term" value="P:neuropeptide signaling pathway"/>
    <property type="evidence" value="ECO:0007669"/>
    <property type="project" value="UniProtKB-KW"/>
</dbReference>
<protein>
    <recommendedName>
        <fullName>WWamide-3</fullName>
    </recommendedName>
</protein>
<accession>P35921</accession>
<evidence type="ECO:0000269" key="1">
    <source>
    </source>
</evidence>
<feature type="peptide" id="PRO_0000044231" description="WWamide-3">
    <location>
        <begin position="1"/>
        <end position="7"/>
    </location>
</feature>
<feature type="modified residue" description="Tryptophan amide" evidence="1">
    <location>
        <position position="7"/>
    </location>
</feature>
<proteinExistence type="evidence at protein level"/>
<keyword id="KW-0027">Amidation</keyword>
<keyword id="KW-0903">Direct protein sequencing</keyword>
<keyword id="KW-0527">Neuropeptide</keyword>